<accession>B3R1M7</accession>
<feature type="chain" id="PRO_1000114609" description="Nucleoid-associated protein RALTA_A1934">
    <location>
        <begin position="1"/>
        <end position="110"/>
    </location>
</feature>
<feature type="region of interest" description="Disordered" evidence="2">
    <location>
        <begin position="88"/>
        <end position="110"/>
    </location>
</feature>
<feature type="compositionally biased region" description="Polar residues" evidence="2">
    <location>
        <begin position="88"/>
        <end position="98"/>
    </location>
</feature>
<feature type="compositionally biased region" description="Pro residues" evidence="2">
    <location>
        <begin position="101"/>
        <end position="110"/>
    </location>
</feature>
<proteinExistence type="inferred from homology"/>
<dbReference type="EMBL" id="CU633749">
    <property type="protein sequence ID" value="CAQ69875.1"/>
    <property type="molecule type" value="Genomic_DNA"/>
</dbReference>
<dbReference type="RefSeq" id="WP_012353187.1">
    <property type="nucleotide sequence ID" value="NC_010528.1"/>
</dbReference>
<dbReference type="SMR" id="B3R1M7"/>
<dbReference type="GeneID" id="29762155"/>
<dbReference type="KEGG" id="cti:RALTA_A1934"/>
<dbReference type="eggNOG" id="COG0718">
    <property type="taxonomic scope" value="Bacteria"/>
</dbReference>
<dbReference type="HOGENOM" id="CLU_140930_0_0_4"/>
<dbReference type="BioCyc" id="CTAI977880:RALTA_RS09330-MONOMER"/>
<dbReference type="Proteomes" id="UP000001692">
    <property type="component" value="Chromosome 1"/>
</dbReference>
<dbReference type="GO" id="GO:0043590">
    <property type="term" value="C:bacterial nucleoid"/>
    <property type="evidence" value="ECO:0007669"/>
    <property type="project" value="UniProtKB-UniRule"/>
</dbReference>
<dbReference type="GO" id="GO:0005829">
    <property type="term" value="C:cytosol"/>
    <property type="evidence" value="ECO:0007669"/>
    <property type="project" value="TreeGrafter"/>
</dbReference>
<dbReference type="GO" id="GO:0003677">
    <property type="term" value="F:DNA binding"/>
    <property type="evidence" value="ECO:0007669"/>
    <property type="project" value="UniProtKB-UniRule"/>
</dbReference>
<dbReference type="FunFam" id="3.30.1310.10:FF:000001">
    <property type="entry name" value="Nucleoid-associated protein YbaB"/>
    <property type="match status" value="1"/>
</dbReference>
<dbReference type="Gene3D" id="3.30.1310.10">
    <property type="entry name" value="Nucleoid-associated protein YbaB-like domain"/>
    <property type="match status" value="1"/>
</dbReference>
<dbReference type="HAMAP" id="MF_00274">
    <property type="entry name" value="DNA_YbaB_EbfC"/>
    <property type="match status" value="1"/>
</dbReference>
<dbReference type="InterPro" id="IPR036894">
    <property type="entry name" value="YbaB-like_sf"/>
</dbReference>
<dbReference type="InterPro" id="IPR004401">
    <property type="entry name" value="YbaB/EbfC"/>
</dbReference>
<dbReference type="NCBIfam" id="TIGR00103">
    <property type="entry name" value="DNA_YbaB_EbfC"/>
    <property type="match status" value="1"/>
</dbReference>
<dbReference type="PANTHER" id="PTHR33449">
    <property type="entry name" value="NUCLEOID-ASSOCIATED PROTEIN YBAB"/>
    <property type="match status" value="1"/>
</dbReference>
<dbReference type="PANTHER" id="PTHR33449:SF1">
    <property type="entry name" value="NUCLEOID-ASSOCIATED PROTEIN YBAB"/>
    <property type="match status" value="1"/>
</dbReference>
<dbReference type="Pfam" id="PF02575">
    <property type="entry name" value="YbaB_DNA_bd"/>
    <property type="match status" value="1"/>
</dbReference>
<dbReference type="PIRSF" id="PIRSF004555">
    <property type="entry name" value="UCP004555"/>
    <property type="match status" value="1"/>
</dbReference>
<dbReference type="SUPFAM" id="SSF82607">
    <property type="entry name" value="YbaB-like"/>
    <property type="match status" value="1"/>
</dbReference>
<protein>
    <recommendedName>
        <fullName evidence="1">Nucleoid-associated protein RALTA_A1934</fullName>
    </recommendedName>
</protein>
<organism>
    <name type="scientific">Cupriavidus taiwanensis (strain DSM 17343 / BCRC 17206 / CCUG 44338 / CIP 107171 / LMG 19424 / R1)</name>
    <name type="common">Ralstonia taiwanensis (strain LMG 19424)</name>
    <dbReference type="NCBI Taxonomy" id="977880"/>
    <lineage>
        <taxon>Bacteria</taxon>
        <taxon>Pseudomonadati</taxon>
        <taxon>Pseudomonadota</taxon>
        <taxon>Betaproteobacteria</taxon>
        <taxon>Burkholderiales</taxon>
        <taxon>Burkholderiaceae</taxon>
        <taxon>Cupriavidus</taxon>
    </lineage>
</organism>
<comment type="function">
    <text evidence="1">Binds to DNA and alters its conformation. May be involved in regulation of gene expression, nucleoid organization and DNA protection.</text>
</comment>
<comment type="subunit">
    <text evidence="1">Homodimer.</text>
</comment>
<comment type="subcellular location">
    <subcellularLocation>
        <location evidence="1">Cytoplasm</location>
        <location evidence="1">Nucleoid</location>
    </subcellularLocation>
</comment>
<comment type="similarity">
    <text evidence="1">Belongs to the YbaB/EbfC family.</text>
</comment>
<keyword id="KW-0963">Cytoplasm</keyword>
<keyword id="KW-0238">DNA-binding</keyword>
<name>Y1934_CUPTR</name>
<reference key="1">
    <citation type="journal article" date="2008" name="Genome Res.">
        <title>Genome sequence of the beta-rhizobium Cupriavidus taiwanensis and comparative genomics of rhizobia.</title>
        <authorList>
            <person name="Amadou C."/>
            <person name="Pascal G."/>
            <person name="Mangenot S."/>
            <person name="Glew M."/>
            <person name="Bontemps C."/>
            <person name="Capela D."/>
            <person name="Carrere S."/>
            <person name="Cruveiller S."/>
            <person name="Dossat C."/>
            <person name="Lajus A."/>
            <person name="Marchetti M."/>
            <person name="Poinsot V."/>
            <person name="Rouy Z."/>
            <person name="Servin B."/>
            <person name="Saad M."/>
            <person name="Schenowitz C."/>
            <person name="Barbe V."/>
            <person name="Batut J."/>
            <person name="Medigue C."/>
            <person name="Masson-Boivin C."/>
        </authorList>
    </citation>
    <scope>NUCLEOTIDE SEQUENCE [LARGE SCALE GENOMIC DNA]</scope>
    <source>
        <strain>DSM 17343 / BCRC 17206 / CCUG 44338 / CIP 107171 / LMG 19424 / R1</strain>
    </source>
</reference>
<sequence length="110" mass="11954">MMKGQLAGLMKQAQQMQENMKKMQEQLAQIEVEGQSGAGLVKVVMTCKNDVKRVTIDPSLLAEGEDKDLLEDLVAAAFNDAVRKAEATTQEKMGSMTSGLPLPPGFKLPF</sequence>
<gene>
    <name type="ordered locus">RALTA_A1934</name>
</gene>
<evidence type="ECO:0000255" key="1">
    <source>
        <dbReference type="HAMAP-Rule" id="MF_00274"/>
    </source>
</evidence>
<evidence type="ECO:0000256" key="2">
    <source>
        <dbReference type="SAM" id="MobiDB-lite"/>
    </source>
</evidence>